<comment type="function">
    <text evidence="2 4 5 6 7 8">Bifunctional glycosyltransferase with both alpha-1,3-xylosyltransferase and beta-1,3-glucuronyltransferase activities involved in the maturation of alpha-dystroglycan (DAG1) by glycosylation leading to DAG1 binding to laminin G-like domain-containing extracellular proteins with high affinity and in a phosphorylated-O-mannosyl trisaccharide dependent manner (PubMed:15958417, PubMed:23125099, PubMed:23135544, PubMed:25138275). Elongates the glucuronyl-beta-1,4-xylose-beta disaccharide primer structure by adding repeating units [-3-Xylose-alpha-1,3-GlcA-beta-1-] to produce a heteropolysaccharide (PubMed:23125099, PubMed:23135544, PubMed:25138275). Supports the maturation of DAG1 more effectively than LARGE1 (By similarity). In addition, can modify both heparan sulfate (HS)- and chondroitin/dermatan sulfate (CS/DS)-proteoglycans (PGs), namely GPC4, with a glycosaminoglycan (GAG)-like polysaccharide composed of xylose and glucuronic acid to confer laminin binding (PubMed:27496765).</text>
</comment>
<comment type="catalytic activity">
    <reaction evidence="5 6">
        <text>3-O-[beta-D-GlcA-(1-&gt;3)-beta-D-Xyl-(1-&gt;4)-Rib-ol-P-Rib-ol-P-3-beta-D-GalNAc-(1-&gt;3)-beta-D-GlcNAc-(1-&gt;4)-(O-6-P-alpha-D-Man)]-Thr-[protein] + UDP-alpha-D-xylose = 3-O-[alpha-D-Xyl-(1-&gt;3)-beta-D-GlcA-(1-&gt;4)-beta-D-Xyl-(1-&gt;4)-Rib-ol-P-Rib-ol-P-3-beta-D-GalNAc-(1-&gt;3)-beta-D-GlcNAc-(1-&gt;4)-(O-6-P-alpha-D-Man)]-Thr-[protein] + UDP + H(+)</text>
        <dbReference type="Rhea" id="RHEA:57336"/>
        <dbReference type="Rhea" id="RHEA-COMP:17482"/>
        <dbReference type="Rhea" id="RHEA-COMP:17483"/>
        <dbReference type="ChEBI" id="CHEBI:15378"/>
        <dbReference type="ChEBI" id="CHEBI:57632"/>
        <dbReference type="ChEBI" id="CHEBI:58223"/>
        <dbReference type="ChEBI" id="CHEBI:177336"/>
        <dbReference type="ChEBI" id="CHEBI:177352"/>
    </reaction>
    <physiologicalReaction direction="left-to-right" evidence="12 13">
        <dbReference type="Rhea" id="RHEA:57337"/>
    </physiologicalReaction>
</comment>
<comment type="catalytic activity">
    <reaction evidence="5 6">
        <text>3-O-{(1-&gt;[3)-alpha-D-Xyl-(1-&gt;3)-beta-D-GlcA-(1-&gt;](n)-4)-beta-D-Xyl-(1-&gt;4)-Rib-ol-P-Rib-ol-P-3-beta-D-GalNAc-(1-&gt;3)-beta-D-GlcNAc-(1-&gt;4)-O-6-P-alpha-D-Man}-L-Thr-[protein] + UDP-alpha-D-glucuronate = 3-O-{beta-D-GlcA-(1-&gt;[3)-alpha-D-Xyl-(1-&gt;3)-beta-D-GlcA-(1-&gt;](n)-4)-beta-D-Xyl-(1-&gt;4)-Rib-ol-P-Rib-ol-P-3-beta-D-GalNAc-(1-&gt;3)-beta-D-GlcNAc-(1-&gt;4)-O-6-P-alpha-D-Man}-L-Thr-[protein] + UDP + H(+)</text>
        <dbReference type="Rhea" id="RHEA:67924"/>
        <dbReference type="Rhea" id="RHEA-COMP:17484"/>
        <dbReference type="Rhea" id="RHEA-COMP:17486"/>
        <dbReference type="ChEBI" id="CHEBI:15378"/>
        <dbReference type="ChEBI" id="CHEBI:58052"/>
        <dbReference type="ChEBI" id="CHEBI:58223"/>
        <dbReference type="ChEBI" id="CHEBI:177354"/>
        <dbReference type="ChEBI" id="CHEBI:177355"/>
    </reaction>
    <physiologicalReaction direction="left-to-right" evidence="12 13">
        <dbReference type="Rhea" id="RHEA:67925"/>
    </physiologicalReaction>
</comment>
<comment type="catalytic activity">
    <reaction evidence="5 6">
        <text>3-O-{beta-D-GlcA-(1-&gt;[3)-alpha-D-Xyl-(1-&gt;3)-beta-D-GlcA-(1-&gt;](n)-4)-beta-D-Xyl-(1-&gt;4)-Rib-ol-P-Rib-ol-P-3-beta-D-GalNAc-(1-&gt;3)-beta-D-GlcNAc-(1-&gt;4)-O-6-P-alpha-D-Man}-L-Thr-[protein] + UDP-alpha-D-xylose = 3-O-{(1-&gt;[3)-alpha-D-Xyl-(1-&gt;3)-beta-D-GlcA-(1-&gt;](n+1)-4)-beta-D-Xyl-(1-&gt;4)-Rib-ol-P-Rib-ol-P-3-beta-D-GalNAc-(1-&gt;3)-beta-D-GlcNAc-(1-&gt;4)-O-6-P-alpha-D-Man}-L-Thr-[protein] + UDP + H(+)</text>
        <dbReference type="Rhea" id="RHEA:68368"/>
        <dbReference type="Rhea" id="RHEA-COMP:17485"/>
        <dbReference type="Rhea" id="RHEA-COMP:17486"/>
        <dbReference type="ChEBI" id="CHEBI:15378"/>
        <dbReference type="ChEBI" id="CHEBI:57632"/>
        <dbReference type="ChEBI" id="CHEBI:58223"/>
        <dbReference type="ChEBI" id="CHEBI:177354"/>
        <dbReference type="ChEBI" id="CHEBI:177355"/>
    </reaction>
    <physiologicalReaction direction="left-to-right" evidence="12 13">
        <dbReference type="Rhea" id="RHEA:68369"/>
    </physiologicalReaction>
</comment>
<comment type="cofactor">
    <cofactor evidence="7">
        <name>Mn(2+)</name>
        <dbReference type="ChEBI" id="CHEBI:29035"/>
    </cofactor>
    <text evidence="7">Binds 2 Mn(2+) ions per subunit. The xylosyltransferase part binds one Mn(2+) and the beta-1,3-glucuronyltransferase part binds one Mn(2+).</text>
</comment>
<comment type="biophysicochemical properties">
    <phDependence>
        <text evidence="5">Optimum pH is from 5.5 to 9.0 for xylosyltransferase activity. Optimum pH is 5.5 for Beta-1,3-glucuronyltransferase activity.</text>
    </phDependence>
</comment>
<comment type="pathway">
    <text evidence="5 6">Protein modification; protein glycosylation.</text>
</comment>
<comment type="subunit">
    <text evidence="2">Interacts with B4GAT1.</text>
</comment>
<comment type="subcellular location">
    <subcellularLocation>
        <location evidence="4">Golgi apparatus membrane</location>
        <topology evidence="11">Single-pass type II membrane protein</topology>
    </subcellularLocation>
</comment>
<comment type="alternative products">
    <event type="alternative splicing"/>
    <isoform>
        <id>Q5XPT3-1</id>
        <name>1</name>
        <sequence type="displayed"/>
    </isoform>
    <isoform>
        <id>Q5XPT3-2</id>
        <name>2</name>
        <sequence type="described" ref="VSP_017489"/>
    </isoform>
    <isoform>
        <id>Q5XPT3-3</id>
        <name>3</name>
        <sequence type="described" ref="VSP_041607 VSP_041608"/>
    </isoform>
</comment>
<comment type="tissue specificity">
    <text evidence="4">Highly expressed in the testis and kidney, but weakly expressed in the heart and brain. Expressed during embryogenesis from 7 dpc.</text>
</comment>
<comment type="miscellaneous">
    <molecule>Isoform 3</molecule>
    <text evidence="11">May be produced at very low levels due to a premature stop codon in the mRNA, leading to nonsense-mediated mRNA decay.</text>
</comment>
<comment type="similarity">
    <text evidence="11">In the C-terminal section; belongs to the glycosyltransferase 49 family.</text>
</comment>
<comment type="similarity">
    <text evidence="11">In the N-terminal section; belongs to the glycosyltransferase 8 family.</text>
</comment>
<comment type="similarity">
    <text evidence="11">Belongs to the glycosyltransferase 8 family.</text>
</comment>
<comment type="sequence caution" evidence="11">
    <conflict type="erroneous translation">
        <sequence resource="EMBL-CDS" id="BAC36913"/>
    </conflict>
    <text>Wrong choice of CDS.</text>
</comment>
<dbReference type="EC" id="2.4.-.-" evidence="5 6"/>
<dbReference type="EC" id="2.4.2.-" evidence="5 6"/>
<dbReference type="EC" id="2.4.1.-" evidence="5 6"/>
<dbReference type="EMBL" id="AY742914">
    <property type="protein sequence ID" value="AAU95213.1"/>
    <property type="molecule type" value="mRNA"/>
</dbReference>
<dbReference type="EMBL" id="AY742915">
    <property type="protein sequence ID" value="AAU95214.1"/>
    <property type="molecule type" value="mRNA"/>
</dbReference>
<dbReference type="EMBL" id="AK077630">
    <property type="protein sequence ID" value="BAC36913.1"/>
    <property type="status" value="ALT_SEQ"/>
    <property type="molecule type" value="mRNA"/>
</dbReference>
<dbReference type="EMBL" id="AL731709">
    <property type="status" value="NOT_ANNOTATED_CDS"/>
    <property type="molecule type" value="Genomic_DNA"/>
</dbReference>
<dbReference type="EMBL" id="BC033922">
    <property type="protein sequence ID" value="AAH33922.1"/>
    <property type="molecule type" value="mRNA"/>
</dbReference>
<dbReference type="EMBL" id="BC096655">
    <property type="protein sequence ID" value="AAH96655.1"/>
    <property type="molecule type" value="mRNA"/>
</dbReference>
<dbReference type="CCDS" id="CCDS16443.2">
    <molecule id="Q5XPT3-1"/>
</dbReference>
<dbReference type="CCDS" id="CCDS50646.1">
    <molecule id="Q5XPT3-2"/>
</dbReference>
<dbReference type="RefSeq" id="NP_001160105.1">
    <molecule id="Q5XPT3-2"/>
    <property type="nucleotide sequence ID" value="NM_001166633.2"/>
</dbReference>
<dbReference type="RefSeq" id="NP_001277702.1">
    <property type="nucleotide sequence ID" value="NM_001290773.1"/>
</dbReference>
<dbReference type="RefSeq" id="NP_001277703.1">
    <property type="nucleotide sequence ID" value="NM_001290774.1"/>
</dbReference>
<dbReference type="RefSeq" id="NP_001277704.1">
    <property type="nucleotide sequence ID" value="NM_001290775.1"/>
</dbReference>
<dbReference type="RefSeq" id="NP_766258.2">
    <molecule id="Q5XPT3-1"/>
    <property type="nucleotide sequence ID" value="NM_172670.3"/>
</dbReference>
<dbReference type="SASBDB" id="Q5XPT3"/>
<dbReference type="SMR" id="Q5XPT3"/>
<dbReference type="FunCoup" id="Q5XPT3">
    <property type="interactions" value="446"/>
</dbReference>
<dbReference type="STRING" id="10090.ENSMUSP00000135400"/>
<dbReference type="CAZy" id="GT49">
    <property type="family name" value="Glycosyltransferase Family 49"/>
</dbReference>
<dbReference type="CAZy" id="GT8">
    <property type="family name" value="Glycosyltransferase Family 8"/>
</dbReference>
<dbReference type="GlyCosmos" id="Q5XPT3">
    <property type="glycosylation" value="3 sites, No reported glycans"/>
</dbReference>
<dbReference type="GlyGen" id="Q5XPT3">
    <property type="glycosylation" value="3 sites"/>
</dbReference>
<dbReference type="iPTMnet" id="Q5XPT3"/>
<dbReference type="PhosphoSitePlus" id="Q5XPT3"/>
<dbReference type="PaxDb" id="10090-ENSMUSP00000064128"/>
<dbReference type="ProteomicsDB" id="264833">
    <molecule id="Q5XPT3-1"/>
</dbReference>
<dbReference type="ProteomicsDB" id="264834">
    <molecule id="Q5XPT3-2"/>
</dbReference>
<dbReference type="Antibodypedia" id="64472">
    <property type="antibodies" value="15 antibodies from 8 providers"/>
</dbReference>
<dbReference type="DNASU" id="228366"/>
<dbReference type="Ensembl" id="ENSMUST00000068586.13">
    <molecule id="Q5XPT3-1"/>
    <property type="protein sequence ID" value="ENSMUSP00000064128.7"/>
    <property type="gene ID" value="ENSMUSG00000040434.17"/>
</dbReference>
<dbReference type="Ensembl" id="ENSMUST00000090582.11">
    <molecule id="Q5XPT3-2"/>
    <property type="protein sequence ID" value="ENSMUSP00000088070.5"/>
    <property type="gene ID" value="ENSMUSG00000040434.17"/>
</dbReference>
<dbReference type="Ensembl" id="ENSMUST00000176289.8">
    <molecule id="Q5XPT3-3"/>
    <property type="protein sequence ID" value="ENSMUSP00000135118.2"/>
    <property type="gene ID" value="ENSMUSG00000040434.17"/>
</dbReference>
<dbReference type="GeneID" id="228366"/>
<dbReference type="KEGG" id="mmu:228366"/>
<dbReference type="UCSC" id="uc008kxn.3">
    <molecule id="Q5XPT3-1"/>
    <property type="organism name" value="mouse"/>
</dbReference>
<dbReference type="UCSC" id="uc008kxp.3">
    <molecule id="Q5XPT3-2"/>
    <property type="organism name" value="mouse"/>
</dbReference>
<dbReference type="AGR" id="MGI:2443769"/>
<dbReference type="CTD" id="120071"/>
<dbReference type="MGI" id="MGI:2443769">
    <property type="gene designation" value="Large2"/>
</dbReference>
<dbReference type="VEuPathDB" id="HostDB:ENSMUSG00000040434"/>
<dbReference type="eggNOG" id="KOG3765">
    <property type="taxonomic scope" value="Eukaryota"/>
</dbReference>
<dbReference type="GeneTree" id="ENSGT00940000158758"/>
<dbReference type="InParanoid" id="Q5XPT3"/>
<dbReference type="OMA" id="LPCIWNV"/>
<dbReference type="OrthoDB" id="411524at2759"/>
<dbReference type="TreeFam" id="TF319168"/>
<dbReference type="BRENDA" id="2.4.1.B80">
    <property type="organism ID" value="3474"/>
</dbReference>
<dbReference type="BRENDA" id="2.4.2.B18">
    <property type="organism ID" value="3474"/>
</dbReference>
<dbReference type="Reactome" id="R-MMU-5173105">
    <property type="pathway name" value="O-linked glycosylation"/>
</dbReference>
<dbReference type="UniPathway" id="UPA00378"/>
<dbReference type="BioGRID-ORCS" id="228366">
    <property type="hits" value="1 hit in 79 CRISPR screens"/>
</dbReference>
<dbReference type="ChiTaRS" id="Gyltl1b">
    <property type="organism name" value="mouse"/>
</dbReference>
<dbReference type="PRO" id="PR:Q5XPT3"/>
<dbReference type="Proteomes" id="UP000000589">
    <property type="component" value="Chromosome 2"/>
</dbReference>
<dbReference type="RNAct" id="Q5XPT3">
    <property type="molecule type" value="protein"/>
</dbReference>
<dbReference type="Bgee" id="ENSMUSG00000040434">
    <property type="expression patterns" value="Expressed in nasolacrimal duct and 121 other cell types or tissues"/>
</dbReference>
<dbReference type="ExpressionAtlas" id="Q5XPT3">
    <property type="expression patterns" value="baseline and differential"/>
</dbReference>
<dbReference type="GO" id="GO:0000139">
    <property type="term" value="C:Golgi membrane"/>
    <property type="evidence" value="ECO:0007669"/>
    <property type="project" value="UniProtKB-SubCell"/>
</dbReference>
<dbReference type="GO" id="GO:0043231">
    <property type="term" value="C:intracellular membrane-bounded organelle"/>
    <property type="evidence" value="ECO:0000314"/>
    <property type="project" value="MGI"/>
</dbReference>
<dbReference type="GO" id="GO:0002162">
    <property type="term" value="F:dystroglycan binding"/>
    <property type="evidence" value="ECO:0000314"/>
    <property type="project" value="MGI"/>
</dbReference>
<dbReference type="GO" id="GO:0015020">
    <property type="term" value="F:glucuronosyltransferase activity"/>
    <property type="evidence" value="ECO:0000314"/>
    <property type="project" value="UniProtKB"/>
</dbReference>
<dbReference type="GO" id="GO:0016757">
    <property type="term" value="F:glycosyltransferase activity"/>
    <property type="evidence" value="ECO:0000315"/>
    <property type="project" value="MGI"/>
</dbReference>
<dbReference type="GO" id="GO:0046872">
    <property type="term" value="F:metal ion binding"/>
    <property type="evidence" value="ECO:0007669"/>
    <property type="project" value="UniProtKB-KW"/>
</dbReference>
<dbReference type="GO" id="GO:0042285">
    <property type="term" value="F:xylosyltransferase activity"/>
    <property type="evidence" value="ECO:0000314"/>
    <property type="project" value="UniProtKB"/>
</dbReference>
<dbReference type="GO" id="GO:0035269">
    <property type="term" value="P:protein O-linked mannosylation"/>
    <property type="evidence" value="ECO:0000314"/>
    <property type="project" value="UniProtKB"/>
</dbReference>
<dbReference type="CDD" id="cd06431">
    <property type="entry name" value="GT8_LARGE_C"/>
    <property type="match status" value="1"/>
</dbReference>
<dbReference type="FunFam" id="3.90.550.10:FF:000229">
    <property type="entry name" value="Glycosyltransferase-like protein LARGE"/>
    <property type="match status" value="1"/>
</dbReference>
<dbReference type="FunFam" id="3.90.550.10:FF:000016">
    <property type="entry name" value="LARGE xylosyl- and glucuronyltransferase 2"/>
    <property type="match status" value="1"/>
</dbReference>
<dbReference type="Gene3D" id="3.90.550.10">
    <property type="entry name" value="Spore Coat Polysaccharide Biosynthesis Protein SpsA, Chain A"/>
    <property type="match status" value="1"/>
</dbReference>
<dbReference type="InterPro" id="IPR002495">
    <property type="entry name" value="Glyco_trans_8"/>
</dbReference>
<dbReference type="InterPro" id="IPR029044">
    <property type="entry name" value="Nucleotide-diphossugar_trans"/>
</dbReference>
<dbReference type="InterPro" id="IPR051292">
    <property type="entry name" value="Xyl/GlcA_transferase"/>
</dbReference>
<dbReference type="PANTHER" id="PTHR12270">
    <property type="entry name" value="GLYCOSYLTRANSFERASE-RELATED"/>
    <property type="match status" value="1"/>
</dbReference>
<dbReference type="PANTHER" id="PTHR12270:SF23">
    <property type="entry name" value="XYLOSYL- AND GLUCURONYLTRANSFERASE LARGE2"/>
    <property type="match status" value="1"/>
</dbReference>
<dbReference type="Pfam" id="PF13896">
    <property type="entry name" value="Glyco_transf_49"/>
    <property type="match status" value="2"/>
</dbReference>
<dbReference type="Pfam" id="PF01501">
    <property type="entry name" value="Glyco_transf_8"/>
    <property type="match status" value="1"/>
</dbReference>
<dbReference type="SUPFAM" id="SSF53448">
    <property type="entry name" value="Nucleotide-diphospho-sugar transferases"/>
    <property type="match status" value="1"/>
</dbReference>
<name>LARG2_MOUSE</name>
<proteinExistence type="evidence at protein level"/>
<evidence type="ECO:0000250" key="1">
    <source>
        <dbReference type="UniProtKB" id="O95461"/>
    </source>
</evidence>
<evidence type="ECO:0000250" key="2">
    <source>
        <dbReference type="UniProtKB" id="Q8N3Y3"/>
    </source>
</evidence>
<evidence type="ECO:0000255" key="3"/>
<evidence type="ECO:0000269" key="4">
    <source>
    </source>
</evidence>
<evidence type="ECO:0000269" key="5">
    <source>
    </source>
</evidence>
<evidence type="ECO:0000269" key="6">
    <source>
    </source>
</evidence>
<evidence type="ECO:0000269" key="7">
    <source>
    </source>
</evidence>
<evidence type="ECO:0000269" key="8">
    <source>
    </source>
</evidence>
<evidence type="ECO:0000303" key="9">
    <source>
    </source>
</evidence>
<evidence type="ECO:0000303" key="10">
    <source>
    </source>
</evidence>
<evidence type="ECO:0000305" key="11"/>
<evidence type="ECO:0000305" key="12">
    <source>
    </source>
</evidence>
<evidence type="ECO:0000305" key="13">
    <source>
    </source>
</evidence>
<evidence type="ECO:0000312" key="14">
    <source>
        <dbReference type="MGI" id="MGI:2443769"/>
    </source>
</evidence>
<keyword id="KW-0025">Alternative splicing</keyword>
<keyword id="KW-0325">Glycoprotein</keyword>
<keyword id="KW-0328">Glycosyltransferase</keyword>
<keyword id="KW-0333">Golgi apparatus</keyword>
<keyword id="KW-0464">Manganese</keyword>
<keyword id="KW-0472">Membrane</keyword>
<keyword id="KW-0479">Metal-binding</keyword>
<keyword id="KW-0511">Multifunctional enzyme</keyword>
<keyword id="KW-1185">Reference proteome</keyword>
<keyword id="KW-0735">Signal-anchor</keyword>
<keyword id="KW-0808">Transferase</keyword>
<keyword id="KW-0812">Transmembrane</keyword>
<keyword id="KW-1133">Transmembrane helix</keyword>
<protein>
    <recommendedName>
        <fullName evidence="11">Xylosyl- and glucuronyltransferase LARGE2</fullName>
        <ecNumber evidence="5 6">2.4.-.-</ecNumber>
    </recommendedName>
    <alternativeName>
        <fullName>Glycosyltransferase-like 1B</fullName>
    </alternativeName>
    <alternativeName>
        <fullName evidence="14">LARGE xylosyl- and glucuronyltransferase 2</fullName>
    </alternativeName>
    <domain>
        <recommendedName>
            <fullName evidence="11">Alpha-1,3-xylosyltransferase LARGE2</fullName>
            <ecNumber evidence="5 6">2.4.2.-</ecNumber>
        </recommendedName>
    </domain>
    <domain>
        <recommendedName>
            <fullName evidence="11">Beta-1,3-glucuronyltransferase LARGE2</fullName>
            <ecNumber evidence="5 6">2.4.1.-</ecNumber>
        </recommendedName>
    </domain>
</protein>
<gene>
    <name evidence="14" type="primary">Large2</name>
    <name type="synonym">Gyltl1b</name>
</gene>
<accession>Q5XPT3</accession>
<accession>A2AHG9</accession>
<accession>Q5XPT2</accession>
<accession>Q8BJZ8</accession>
<accession>Q8K253</accession>
<organism>
    <name type="scientific">Mus musculus</name>
    <name type="common">Mouse</name>
    <dbReference type="NCBI Taxonomy" id="10090"/>
    <lineage>
        <taxon>Eukaryota</taxon>
        <taxon>Metazoa</taxon>
        <taxon>Chordata</taxon>
        <taxon>Craniata</taxon>
        <taxon>Vertebrata</taxon>
        <taxon>Euteleostomi</taxon>
        <taxon>Mammalia</taxon>
        <taxon>Eutheria</taxon>
        <taxon>Euarchontoglires</taxon>
        <taxon>Glires</taxon>
        <taxon>Rodentia</taxon>
        <taxon>Myomorpha</taxon>
        <taxon>Muroidea</taxon>
        <taxon>Muridae</taxon>
        <taxon>Murinae</taxon>
        <taxon>Mus</taxon>
        <taxon>Mus</taxon>
    </lineage>
</organism>
<sequence>MLPRGRPRAMGAAVLLLLLLLVVGFFLFGRDPDYGLGTTATLDEDPYRSRNLSASSPQLLLPPKCEMLHVAIVCAGYNSSREIITLTKSLLFYRKNPLHLHLITDAVARNILETLFRTWMVPAVVVSFYDAEELKPLVSWIPNKHYSGLYGLMKLVLPSILPPSLARVIVLDTDVTFSSDIVELWALFDHFSDKQVVGLVENQSDWYLGNLWKNHRPWPALGRGFNTGVILLWLDRLQQTGWEQMWKVTAKRELLTLMATSLADQDIFNAVIKEHPHLVHPLPCVWNVQLSDHTRAERCYLEAADLKVIHWNSPKKLRVKNKHAEFFRNLHLTFLGYDGKLLRRELFGCPNQFPPGAEQLQQALTQLDEEEPCFEFRQQQLTVHRVHITFLPHQPPPPQPHDVTLVAQLSMDRLQMLEALCRHWPGPMSLALYLTDEEAQQFLHFVETSPVLSMRKDVAYHVVYRDGPLYPVNQLRNVALAQALTPYVFLSDIDFLPAYSLYDYLRASIEQLELDSRRKTALVVPAFETLHYRFSFPNSKAELLTLLDAGSLHTFRYHEWPQGHSSTDYSRWREAQAPYSVQWSADYEPYVVVPRDCPRYDPRFVGFGWNKVAHIIELDAQEYEFLVLPEAFSIHLPHAPSLDISRFRSSPTYRNCLQALKEEFHQDLSRRYGSAALKYLTALQQARSRA</sequence>
<reference key="1">
    <citation type="journal article" date="2005" name="Glycobiology">
        <title>Characterization of the LARGE family of putative glycosyltransferases associated with dystroglycanopathies.</title>
        <authorList>
            <person name="Grewal P.K."/>
            <person name="McLaughlan J.M."/>
            <person name="Moore C.J."/>
            <person name="Browning C.A."/>
            <person name="Hewitt J.E."/>
        </authorList>
    </citation>
    <scope>NUCLEOTIDE SEQUENCE [MRNA] (ISOFORMS 1 AND 2)</scope>
    <scope>FUNCTION</scope>
    <scope>SUBCELLULAR LOCATION</scope>
    <scope>TISSUE SPECIFICITY</scope>
    <source>
        <strain>C57BL/6J</strain>
    </source>
</reference>
<reference key="2">
    <citation type="journal article" date="2005" name="Science">
        <title>The transcriptional landscape of the mammalian genome.</title>
        <authorList>
            <person name="Carninci P."/>
            <person name="Kasukawa T."/>
            <person name="Katayama S."/>
            <person name="Gough J."/>
            <person name="Frith M.C."/>
            <person name="Maeda N."/>
            <person name="Oyama R."/>
            <person name="Ravasi T."/>
            <person name="Lenhard B."/>
            <person name="Wells C."/>
            <person name="Kodzius R."/>
            <person name="Shimokawa K."/>
            <person name="Bajic V.B."/>
            <person name="Brenner S.E."/>
            <person name="Batalov S."/>
            <person name="Forrest A.R."/>
            <person name="Zavolan M."/>
            <person name="Davis M.J."/>
            <person name="Wilming L.G."/>
            <person name="Aidinis V."/>
            <person name="Allen J.E."/>
            <person name="Ambesi-Impiombato A."/>
            <person name="Apweiler R."/>
            <person name="Aturaliya R.N."/>
            <person name="Bailey T.L."/>
            <person name="Bansal M."/>
            <person name="Baxter L."/>
            <person name="Beisel K.W."/>
            <person name="Bersano T."/>
            <person name="Bono H."/>
            <person name="Chalk A.M."/>
            <person name="Chiu K.P."/>
            <person name="Choudhary V."/>
            <person name="Christoffels A."/>
            <person name="Clutterbuck D.R."/>
            <person name="Crowe M.L."/>
            <person name="Dalla E."/>
            <person name="Dalrymple B.P."/>
            <person name="de Bono B."/>
            <person name="Della Gatta G."/>
            <person name="di Bernardo D."/>
            <person name="Down T."/>
            <person name="Engstrom P."/>
            <person name="Fagiolini M."/>
            <person name="Faulkner G."/>
            <person name="Fletcher C.F."/>
            <person name="Fukushima T."/>
            <person name="Furuno M."/>
            <person name="Futaki S."/>
            <person name="Gariboldi M."/>
            <person name="Georgii-Hemming P."/>
            <person name="Gingeras T.R."/>
            <person name="Gojobori T."/>
            <person name="Green R.E."/>
            <person name="Gustincich S."/>
            <person name="Harbers M."/>
            <person name="Hayashi Y."/>
            <person name="Hensch T.K."/>
            <person name="Hirokawa N."/>
            <person name="Hill D."/>
            <person name="Huminiecki L."/>
            <person name="Iacono M."/>
            <person name="Ikeo K."/>
            <person name="Iwama A."/>
            <person name="Ishikawa T."/>
            <person name="Jakt M."/>
            <person name="Kanapin A."/>
            <person name="Katoh M."/>
            <person name="Kawasawa Y."/>
            <person name="Kelso J."/>
            <person name="Kitamura H."/>
            <person name="Kitano H."/>
            <person name="Kollias G."/>
            <person name="Krishnan S.P."/>
            <person name="Kruger A."/>
            <person name="Kummerfeld S.K."/>
            <person name="Kurochkin I.V."/>
            <person name="Lareau L.F."/>
            <person name="Lazarevic D."/>
            <person name="Lipovich L."/>
            <person name="Liu J."/>
            <person name="Liuni S."/>
            <person name="McWilliam S."/>
            <person name="Madan Babu M."/>
            <person name="Madera M."/>
            <person name="Marchionni L."/>
            <person name="Matsuda H."/>
            <person name="Matsuzawa S."/>
            <person name="Miki H."/>
            <person name="Mignone F."/>
            <person name="Miyake S."/>
            <person name="Morris K."/>
            <person name="Mottagui-Tabar S."/>
            <person name="Mulder N."/>
            <person name="Nakano N."/>
            <person name="Nakauchi H."/>
            <person name="Ng P."/>
            <person name="Nilsson R."/>
            <person name="Nishiguchi S."/>
            <person name="Nishikawa S."/>
            <person name="Nori F."/>
            <person name="Ohara O."/>
            <person name="Okazaki Y."/>
            <person name="Orlando V."/>
            <person name="Pang K.C."/>
            <person name="Pavan W.J."/>
            <person name="Pavesi G."/>
            <person name="Pesole G."/>
            <person name="Petrovsky N."/>
            <person name="Piazza S."/>
            <person name="Reed J."/>
            <person name="Reid J.F."/>
            <person name="Ring B.Z."/>
            <person name="Ringwald M."/>
            <person name="Rost B."/>
            <person name="Ruan Y."/>
            <person name="Salzberg S.L."/>
            <person name="Sandelin A."/>
            <person name="Schneider C."/>
            <person name="Schoenbach C."/>
            <person name="Sekiguchi K."/>
            <person name="Semple C.A."/>
            <person name="Seno S."/>
            <person name="Sessa L."/>
            <person name="Sheng Y."/>
            <person name="Shibata Y."/>
            <person name="Shimada H."/>
            <person name="Shimada K."/>
            <person name="Silva D."/>
            <person name="Sinclair B."/>
            <person name="Sperling S."/>
            <person name="Stupka E."/>
            <person name="Sugiura K."/>
            <person name="Sultana R."/>
            <person name="Takenaka Y."/>
            <person name="Taki K."/>
            <person name="Tammoja K."/>
            <person name="Tan S.L."/>
            <person name="Tang S."/>
            <person name="Taylor M.S."/>
            <person name="Tegner J."/>
            <person name="Teichmann S.A."/>
            <person name="Ueda H.R."/>
            <person name="van Nimwegen E."/>
            <person name="Verardo R."/>
            <person name="Wei C.L."/>
            <person name="Yagi K."/>
            <person name="Yamanishi H."/>
            <person name="Zabarovsky E."/>
            <person name="Zhu S."/>
            <person name="Zimmer A."/>
            <person name="Hide W."/>
            <person name="Bult C."/>
            <person name="Grimmond S.M."/>
            <person name="Teasdale R.D."/>
            <person name="Liu E.T."/>
            <person name="Brusic V."/>
            <person name="Quackenbush J."/>
            <person name="Wahlestedt C."/>
            <person name="Mattick J.S."/>
            <person name="Hume D.A."/>
            <person name="Kai C."/>
            <person name="Sasaki D."/>
            <person name="Tomaru Y."/>
            <person name="Fukuda S."/>
            <person name="Kanamori-Katayama M."/>
            <person name="Suzuki M."/>
            <person name="Aoki J."/>
            <person name="Arakawa T."/>
            <person name="Iida J."/>
            <person name="Imamura K."/>
            <person name="Itoh M."/>
            <person name="Kato T."/>
            <person name="Kawaji H."/>
            <person name="Kawagashira N."/>
            <person name="Kawashima T."/>
            <person name="Kojima M."/>
            <person name="Kondo S."/>
            <person name="Konno H."/>
            <person name="Nakano K."/>
            <person name="Ninomiya N."/>
            <person name="Nishio T."/>
            <person name="Okada M."/>
            <person name="Plessy C."/>
            <person name="Shibata K."/>
            <person name="Shiraki T."/>
            <person name="Suzuki S."/>
            <person name="Tagami M."/>
            <person name="Waki K."/>
            <person name="Watahiki A."/>
            <person name="Okamura-Oho Y."/>
            <person name="Suzuki H."/>
            <person name="Kawai J."/>
            <person name="Hayashizaki Y."/>
        </authorList>
    </citation>
    <scope>NUCLEOTIDE SEQUENCE [LARGE SCALE MRNA] (ISOFORM 3)</scope>
    <source>
        <strain>C57BL/6J</strain>
    </source>
</reference>
<reference key="3">
    <citation type="journal article" date="2009" name="PLoS Biol.">
        <title>Lineage-specific biology revealed by a finished genome assembly of the mouse.</title>
        <authorList>
            <person name="Church D.M."/>
            <person name="Goodstadt L."/>
            <person name="Hillier L.W."/>
            <person name="Zody M.C."/>
            <person name="Goldstein S."/>
            <person name="She X."/>
            <person name="Bult C.J."/>
            <person name="Agarwala R."/>
            <person name="Cherry J.L."/>
            <person name="DiCuccio M."/>
            <person name="Hlavina W."/>
            <person name="Kapustin Y."/>
            <person name="Meric P."/>
            <person name="Maglott D."/>
            <person name="Birtle Z."/>
            <person name="Marques A.C."/>
            <person name="Graves T."/>
            <person name="Zhou S."/>
            <person name="Teague B."/>
            <person name="Potamousis K."/>
            <person name="Churas C."/>
            <person name="Place M."/>
            <person name="Herschleb J."/>
            <person name="Runnheim R."/>
            <person name="Forrest D."/>
            <person name="Amos-Landgraf J."/>
            <person name="Schwartz D.C."/>
            <person name="Cheng Z."/>
            <person name="Lindblad-Toh K."/>
            <person name="Eichler E.E."/>
            <person name="Ponting C.P."/>
        </authorList>
    </citation>
    <scope>NUCLEOTIDE SEQUENCE [LARGE SCALE GENOMIC DNA]</scope>
    <source>
        <strain>C57BL/6J</strain>
    </source>
</reference>
<reference key="4">
    <citation type="journal article" date="2004" name="Genome Res.">
        <title>The status, quality, and expansion of the NIH full-length cDNA project: the Mammalian Gene Collection (MGC).</title>
        <authorList>
            <consortium name="The MGC Project Team"/>
        </authorList>
    </citation>
    <scope>NUCLEOTIDE SEQUENCE [LARGE SCALE MRNA] (ISOFORM 1)</scope>
    <source>
        <strain>Czech II</strain>
        <tissue>Lung</tissue>
        <tissue>Mammary tumor</tissue>
    </source>
</reference>
<reference key="5">
    <citation type="journal article" date="2013" name="Glycobiology">
        <title>Xylosyl- and glucuronyltransferase functions of LARGE in alpha-dystroglycan modification are conserved in LARGE2.</title>
        <authorList>
            <person name="Inamori K."/>
            <person name="Hara Y."/>
            <person name="Willer T."/>
            <person name="Anderson M.E."/>
            <person name="Zhu Z."/>
            <person name="Yoshida-Moriguchi T."/>
            <person name="Campbell K.P."/>
        </authorList>
    </citation>
    <scope>FUNCTION</scope>
    <scope>PATHWAY</scope>
    <scope>CATALYTIC ACTIVITY</scope>
    <scope>BIOPHYSICOCHEMICAL PROPERTIES</scope>
</reference>
<reference key="6">
    <citation type="journal article" date="2013" name="Glycobiology">
        <title>LARGE2 generates the same xylose- and glucuronic acid-containing glycan structures as LARGE.</title>
        <authorList>
            <person name="Ashikov A."/>
            <person name="Buettner F.F."/>
            <person name="Tiemann B."/>
            <person name="Gerardy-Schahn R."/>
            <person name="Bakker H."/>
        </authorList>
    </citation>
    <scope>FUNCTION</scope>
    <scope>PATHWAY</scope>
    <scope>CATALYTIC ACTIVITY</scope>
</reference>
<reference key="7">
    <citation type="journal article" date="2014" name="J. Biol. Chem.">
        <title>Endogenous glucuronyltransferase activity of LARGE or LARGE2 required for functional modification of alpha-dystroglycan in cells and tissues.</title>
        <authorList>
            <person name="Inamori K."/>
            <person name="Willer T."/>
            <person name="Hara Y."/>
            <person name="Venzke D."/>
            <person name="Anderson M.E."/>
            <person name="Clarke N.F."/>
            <person name="Guicheney P."/>
            <person name="Bonnemann C.G."/>
            <person name="Moore S.A."/>
            <person name="Campbell K.P."/>
        </authorList>
    </citation>
    <scope>FUNCTION</scope>
    <scope>COFACTOR</scope>
</reference>
<reference key="8">
    <citation type="journal article" date="2016" name="Glycobiology">
        <title>LARGE2-dependent glycosylation confers laminin-binding ability on proteoglycans.</title>
        <authorList>
            <person name="Inamori K.I."/>
            <person name="Beedle A.M."/>
            <person name="de Bernabe D.B."/>
            <person name="Wright M.E."/>
            <person name="Campbell K.P."/>
        </authorList>
    </citation>
    <scope>FUNCTION</scope>
</reference>
<feature type="chain" id="PRO_0000226812" description="Xylosyl- and glucuronyltransferase LARGE2">
    <location>
        <begin position="1"/>
        <end position="690"/>
    </location>
</feature>
<feature type="topological domain" description="Cytoplasmic" evidence="3">
    <location>
        <begin position="1"/>
        <end position="8"/>
    </location>
</feature>
<feature type="transmembrane region" description="Helical; Signal-anchor for type II membrane protein" evidence="3">
    <location>
        <begin position="9"/>
        <end position="29"/>
    </location>
</feature>
<feature type="topological domain" description="Lumenal" evidence="3">
    <location>
        <begin position="30"/>
        <end position="690"/>
    </location>
</feature>
<feature type="region of interest" description="Xylosyltransferase activity" evidence="1">
    <location>
        <begin position="68"/>
        <end position="343"/>
    </location>
</feature>
<feature type="region of interest" description="Glucuronyltransferase activity" evidence="1">
    <location>
        <begin position="344"/>
        <end position="686"/>
    </location>
</feature>
<feature type="binding site" evidence="2">
    <location>
        <position position="172"/>
    </location>
    <ligand>
        <name>Mn(2+)</name>
        <dbReference type="ChEBI" id="CHEBI:29035"/>
        <label>1</label>
    </ligand>
</feature>
<feature type="binding site" evidence="2">
    <location>
        <position position="174"/>
    </location>
    <ligand>
        <name>Mn(2+)</name>
        <dbReference type="ChEBI" id="CHEBI:29035"/>
        <label>1</label>
    </ligand>
</feature>
<feature type="binding site" evidence="2">
    <location>
        <position position="492"/>
    </location>
    <ligand>
        <name>Mn(2+)</name>
        <dbReference type="ChEBI" id="CHEBI:29035"/>
        <label>2</label>
    </ligand>
</feature>
<feature type="binding site" evidence="2">
    <location>
        <position position="494"/>
    </location>
    <ligand>
        <name>Mn(2+)</name>
        <dbReference type="ChEBI" id="CHEBI:29035"/>
        <label>2</label>
    </ligand>
</feature>
<feature type="glycosylation site" description="N-linked (GlcNAc...) asparagine" evidence="3">
    <location>
        <position position="51"/>
    </location>
</feature>
<feature type="glycosylation site" description="N-linked (GlcNAc...) asparagine" evidence="3">
    <location>
        <position position="78"/>
    </location>
</feature>
<feature type="glycosylation site" description="N-linked (GlcNAc...) asparagine" evidence="3">
    <location>
        <position position="202"/>
    </location>
</feature>
<feature type="splice variant" id="VSP_041607" description="In isoform 3." evidence="10">
    <original>MLHVAIVCAG</original>
    <variation>EKSAAPPPDN</variation>
    <location>
        <begin position="67"/>
        <end position="76"/>
    </location>
</feature>
<feature type="splice variant" id="VSP_041608" description="In isoform 3." evidence="10">
    <location>
        <begin position="77"/>
        <end position="690"/>
    </location>
</feature>
<feature type="splice variant" id="VSP_017489" description="In isoform 2." evidence="9">
    <location>
        <begin position="193"/>
        <end position="227"/>
    </location>
</feature>
<feature type="sequence conflict" description="In Ref. 2; BAC36913." evidence="11" ref="2">
    <original>K</original>
    <variation>N</variation>
    <location>
        <position position="144"/>
    </location>
</feature>
<feature type="sequence conflict" description="In Ref. 4; AAH33922." evidence="11" ref="4">
    <original>S</original>
    <variation>R</variation>
    <location>
        <position position="580"/>
    </location>
</feature>